<keyword id="KW-0170">Cobalt</keyword>
<keyword id="KW-0963">Cytoplasm</keyword>
<keyword id="KW-0460">Magnesium</keyword>
<keyword id="KW-0479">Metal-binding</keyword>
<keyword id="KW-0520">NAD</keyword>
<keyword id="KW-0521">NADP</keyword>
<keyword id="KW-0560">Oxidoreductase</keyword>
<keyword id="KW-0664">Pyridoxine biosynthesis</keyword>
<keyword id="KW-1185">Reference proteome</keyword>
<keyword id="KW-0862">Zinc</keyword>
<proteinExistence type="inferred from homology"/>
<feature type="chain" id="PRO_1000128236" description="4-hydroxythreonine-4-phosphate dehydrogenase">
    <location>
        <begin position="1"/>
        <end position="337"/>
    </location>
</feature>
<feature type="binding site" evidence="1">
    <location>
        <position position="138"/>
    </location>
    <ligand>
        <name>substrate</name>
    </ligand>
</feature>
<feature type="binding site" evidence="1">
    <location>
        <position position="139"/>
    </location>
    <ligand>
        <name>substrate</name>
    </ligand>
</feature>
<feature type="binding site" evidence="1">
    <location>
        <position position="168"/>
    </location>
    <ligand>
        <name>a divalent metal cation</name>
        <dbReference type="ChEBI" id="CHEBI:60240"/>
        <note>ligand shared between dimeric partners</note>
    </ligand>
</feature>
<feature type="binding site" evidence="1">
    <location>
        <position position="212"/>
    </location>
    <ligand>
        <name>a divalent metal cation</name>
        <dbReference type="ChEBI" id="CHEBI:60240"/>
        <note>ligand shared between dimeric partners</note>
    </ligand>
</feature>
<feature type="binding site" evidence="1">
    <location>
        <position position="267"/>
    </location>
    <ligand>
        <name>a divalent metal cation</name>
        <dbReference type="ChEBI" id="CHEBI:60240"/>
        <note>ligand shared between dimeric partners</note>
    </ligand>
</feature>
<feature type="binding site" evidence="1">
    <location>
        <position position="275"/>
    </location>
    <ligand>
        <name>substrate</name>
    </ligand>
</feature>
<feature type="binding site" evidence="1">
    <location>
        <position position="284"/>
    </location>
    <ligand>
        <name>substrate</name>
    </ligand>
</feature>
<feature type="binding site" evidence="1">
    <location>
        <position position="293"/>
    </location>
    <ligand>
        <name>substrate</name>
    </ligand>
</feature>
<accession>B2IDU5</accession>
<name>PDXA_BEII9</name>
<reference key="1">
    <citation type="journal article" date="2010" name="J. Bacteriol.">
        <title>Complete genome sequence of Beijerinckia indica subsp. indica.</title>
        <authorList>
            <person name="Tamas I."/>
            <person name="Dedysh S.N."/>
            <person name="Liesack W."/>
            <person name="Stott M.B."/>
            <person name="Alam M."/>
            <person name="Murrell J.C."/>
            <person name="Dunfield P.F."/>
        </authorList>
    </citation>
    <scope>NUCLEOTIDE SEQUENCE [LARGE SCALE GENOMIC DNA]</scope>
    <source>
        <strain>ATCC 9039 / DSM 1715 / NCIMB 8712</strain>
    </source>
</reference>
<sequence>MVMLDHPLAVTMGDPSGIGPEIIAKMYLRRPDKRNWIVVGDPLVMEHAIANLGVAVQIRRIATVEEAGCEDGVLNVLASSSLATLPAVGRVSAVSGQAAYDAIVTAIGLARQGTIRGIVTAPIHKEALAAAGIHYPGHTEILAEQGGAQHVAMMLANDEIRTVLVTIHCSLADAIRKADFPAQMQAIRLAHEGARALGIVQPRIAVAGLNPHAGEGGLFGDEEIRIITPAIAAARAEGIDATGPWPGDTVFMQARLGKFDVVVAQYHDQGLIPVKFMGLEKGVNITLGLPFVRTSPDHGTAFDIAGRGIADSSSLETAFDYATRLKVPTPFFSGAMS</sequence>
<organism>
    <name type="scientific">Beijerinckia indica subsp. indica (strain ATCC 9039 / DSM 1715 / NCIMB 8712)</name>
    <dbReference type="NCBI Taxonomy" id="395963"/>
    <lineage>
        <taxon>Bacteria</taxon>
        <taxon>Pseudomonadati</taxon>
        <taxon>Pseudomonadota</taxon>
        <taxon>Alphaproteobacteria</taxon>
        <taxon>Hyphomicrobiales</taxon>
        <taxon>Beijerinckiaceae</taxon>
        <taxon>Beijerinckia</taxon>
    </lineage>
</organism>
<gene>
    <name evidence="1" type="primary">pdxA</name>
    <name type="ordered locus">Bind_3318</name>
</gene>
<protein>
    <recommendedName>
        <fullName evidence="1">4-hydroxythreonine-4-phosphate dehydrogenase</fullName>
        <ecNumber evidence="1">1.1.1.262</ecNumber>
    </recommendedName>
    <alternativeName>
        <fullName evidence="1">4-(phosphohydroxy)-L-threonine dehydrogenase</fullName>
    </alternativeName>
</protein>
<comment type="function">
    <text evidence="1">Catalyzes the NAD(P)-dependent oxidation of 4-(phosphooxy)-L-threonine (HTP) into 2-amino-3-oxo-4-(phosphooxy)butyric acid which spontaneously decarboxylates to form 3-amino-2-oxopropyl phosphate (AHAP).</text>
</comment>
<comment type="catalytic activity">
    <reaction evidence="1">
        <text>4-(phosphooxy)-L-threonine + NAD(+) = 3-amino-2-oxopropyl phosphate + CO2 + NADH</text>
        <dbReference type="Rhea" id="RHEA:32275"/>
        <dbReference type="ChEBI" id="CHEBI:16526"/>
        <dbReference type="ChEBI" id="CHEBI:57279"/>
        <dbReference type="ChEBI" id="CHEBI:57540"/>
        <dbReference type="ChEBI" id="CHEBI:57945"/>
        <dbReference type="ChEBI" id="CHEBI:58452"/>
        <dbReference type="EC" id="1.1.1.262"/>
    </reaction>
</comment>
<comment type="cofactor">
    <cofactor evidence="1">
        <name>Zn(2+)</name>
        <dbReference type="ChEBI" id="CHEBI:29105"/>
    </cofactor>
    <cofactor evidence="1">
        <name>Mg(2+)</name>
        <dbReference type="ChEBI" id="CHEBI:18420"/>
    </cofactor>
    <cofactor evidence="1">
        <name>Co(2+)</name>
        <dbReference type="ChEBI" id="CHEBI:48828"/>
    </cofactor>
    <text evidence="1">Binds 1 divalent metal cation per subunit. Can use ions such as Zn(2+), Mg(2+) or Co(2+).</text>
</comment>
<comment type="pathway">
    <text evidence="1">Cofactor biosynthesis; pyridoxine 5'-phosphate biosynthesis; pyridoxine 5'-phosphate from D-erythrose 4-phosphate: step 4/5.</text>
</comment>
<comment type="subunit">
    <text evidence="1">Homodimer.</text>
</comment>
<comment type="subcellular location">
    <subcellularLocation>
        <location evidence="1">Cytoplasm</location>
    </subcellularLocation>
</comment>
<comment type="miscellaneous">
    <text evidence="1">The active site is located at the dimer interface.</text>
</comment>
<comment type="similarity">
    <text evidence="2">Belongs to the PdxA family.</text>
</comment>
<evidence type="ECO:0000250" key="1">
    <source>
        <dbReference type="UniProtKB" id="P19624"/>
    </source>
</evidence>
<evidence type="ECO:0000305" key="2"/>
<dbReference type="EC" id="1.1.1.262" evidence="1"/>
<dbReference type="EMBL" id="CP001016">
    <property type="protein sequence ID" value="ACB96877.1"/>
    <property type="molecule type" value="Genomic_DNA"/>
</dbReference>
<dbReference type="RefSeq" id="WP_012386225.1">
    <property type="nucleotide sequence ID" value="NC_010581.1"/>
</dbReference>
<dbReference type="SMR" id="B2IDU5"/>
<dbReference type="STRING" id="395963.Bind_3318"/>
<dbReference type="KEGG" id="bid:Bind_3318"/>
<dbReference type="eggNOG" id="COG1995">
    <property type="taxonomic scope" value="Bacteria"/>
</dbReference>
<dbReference type="HOGENOM" id="CLU_040168_1_0_5"/>
<dbReference type="OrthoDB" id="9801783at2"/>
<dbReference type="UniPathway" id="UPA00244">
    <property type="reaction ID" value="UER00312"/>
</dbReference>
<dbReference type="Proteomes" id="UP000001695">
    <property type="component" value="Chromosome"/>
</dbReference>
<dbReference type="GO" id="GO:0005737">
    <property type="term" value="C:cytoplasm"/>
    <property type="evidence" value="ECO:0007669"/>
    <property type="project" value="UniProtKB-SubCell"/>
</dbReference>
<dbReference type="GO" id="GO:0050570">
    <property type="term" value="F:4-hydroxythreonine-4-phosphate dehydrogenase activity"/>
    <property type="evidence" value="ECO:0007669"/>
    <property type="project" value="UniProtKB-EC"/>
</dbReference>
<dbReference type="GO" id="GO:0046872">
    <property type="term" value="F:metal ion binding"/>
    <property type="evidence" value="ECO:0007669"/>
    <property type="project" value="UniProtKB-KW"/>
</dbReference>
<dbReference type="GO" id="GO:0051287">
    <property type="term" value="F:NAD binding"/>
    <property type="evidence" value="ECO:0007669"/>
    <property type="project" value="InterPro"/>
</dbReference>
<dbReference type="GO" id="GO:0008615">
    <property type="term" value="P:pyridoxine biosynthetic process"/>
    <property type="evidence" value="ECO:0007669"/>
    <property type="project" value="UniProtKB-KW"/>
</dbReference>
<dbReference type="Gene3D" id="3.40.718.10">
    <property type="entry name" value="Isopropylmalate Dehydrogenase"/>
    <property type="match status" value="1"/>
</dbReference>
<dbReference type="InterPro" id="IPR005255">
    <property type="entry name" value="PdxA_fam"/>
</dbReference>
<dbReference type="NCBIfam" id="TIGR00557">
    <property type="entry name" value="pdxA"/>
    <property type="match status" value="1"/>
</dbReference>
<dbReference type="PANTHER" id="PTHR30004">
    <property type="entry name" value="4-HYDROXYTHREONINE-4-PHOSPHATE DEHYDROGENASE"/>
    <property type="match status" value="1"/>
</dbReference>
<dbReference type="PANTHER" id="PTHR30004:SF6">
    <property type="entry name" value="D-THREONATE 4-PHOSPHATE DEHYDROGENASE"/>
    <property type="match status" value="1"/>
</dbReference>
<dbReference type="Pfam" id="PF04166">
    <property type="entry name" value="PdxA"/>
    <property type="match status" value="1"/>
</dbReference>
<dbReference type="SUPFAM" id="SSF53659">
    <property type="entry name" value="Isocitrate/Isopropylmalate dehydrogenase-like"/>
    <property type="match status" value="1"/>
</dbReference>